<comment type="function">
    <text evidence="1">Involved in urease metallocenter assembly. Binds nickel. Probably functions as a nickel donor during metallocenter assembly.</text>
</comment>
<comment type="subcellular location">
    <subcellularLocation>
        <location evidence="1">Cytoplasm</location>
    </subcellularLocation>
</comment>
<comment type="similarity">
    <text evidence="1">Belongs to the UreE family.</text>
</comment>
<keyword id="KW-0143">Chaperone</keyword>
<keyword id="KW-0963">Cytoplasm</keyword>
<keyword id="KW-0533">Nickel</keyword>
<keyword id="KW-0996">Nickel insertion</keyword>
<name>UREE_BURVG</name>
<accession>A4JC41</accession>
<protein>
    <recommendedName>
        <fullName evidence="1">Urease accessory protein UreE</fullName>
    </recommendedName>
</protein>
<gene>
    <name evidence="1" type="primary">ureE</name>
    <name type="ordered locus">Bcep1808_0832</name>
</gene>
<proteinExistence type="inferred from homology"/>
<reference key="1">
    <citation type="submission" date="2007-03" db="EMBL/GenBank/DDBJ databases">
        <title>Complete sequence of chromosome 1 of Burkholderia vietnamiensis G4.</title>
        <authorList>
            <consortium name="US DOE Joint Genome Institute"/>
            <person name="Copeland A."/>
            <person name="Lucas S."/>
            <person name="Lapidus A."/>
            <person name="Barry K."/>
            <person name="Detter J.C."/>
            <person name="Glavina del Rio T."/>
            <person name="Hammon N."/>
            <person name="Israni S."/>
            <person name="Dalin E."/>
            <person name="Tice H."/>
            <person name="Pitluck S."/>
            <person name="Chain P."/>
            <person name="Malfatti S."/>
            <person name="Shin M."/>
            <person name="Vergez L."/>
            <person name="Schmutz J."/>
            <person name="Larimer F."/>
            <person name="Land M."/>
            <person name="Hauser L."/>
            <person name="Kyrpides N."/>
            <person name="Tiedje J."/>
            <person name="Richardson P."/>
        </authorList>
    </citation>
    <scope>NUCLEOTIDE SEQUENCE [LARGE SCALE GENOMIC DNA]</scope>
    <source>
        <strain>G4 / LMG 22486</strain>
    </source>
</reference>
<evidence type="ECO:0000255" key="1">
    <source>
        <dbReference type="HAMAP-Rule" id="MF_00822"/>
    </source>
</evidence>
<evidence type="ECO:0000256" key="2">
    <source>
        <dbReference type="SAM" id="MobiDB-lite"/>
    </source>
</evidence>
<organism>
    <name type="scientific">Burkholderia vietnamiensis (strain G4 / LMG 22486)</name>
    <name type="common">Burkholderia cepacia (strain R1808)</name>
    <dbReference type="NCBI Taxonomy" id="269482"/>
    <lineage>
        <taxon>Bacteria</taxon>
        <taxon>Pseudomonadati</taxon>
        <taxon>Pseudomonadota</taxon>
        <taxon>Betaproteobacteria</taxon>
        <taxon>Burkholderiales</taxon>
        <taxon>Burkholderiaceae</taxon>
        <taxon>Burkholderia</taxon>
        <taxon>Burkholderia cepacia complex</taxon>
    </lineage>
</organism>
<sequence>MRTLDKRIAPNVKLAASLVARAPTLTLAFDARCKSRVAATLDTGEDVAVLLPRGTVLRDGDVLVADDGALVRIVAAPETVLLVRAHDPLTLMRAAYHLGNRHTPVEIGDGYLKLEADPVLADMLRRLGTQVDETQAPFQPEAGAYGGGHKHGHDATFAEDYALAQQVFGEHHGHAHPHPHDHDHQHGPGCAHGRHGHDHH</sequence>
<dbReference type="EMBL" id="CP000614">
    <property type="protein sequence ID" value="ABO53844.1"/>
    <property type="molecule type" value="Genomic_DNA"/>
</dbReference>
<dbReference type="SMR" id="A4JC41"/>
<dbReference type="KEGG" id="bvi:Bcep1808_0832"/>
<dbReference type="eggNOG" id="COG2371">
    <property type="taxonomic scope" value="Bacteria"/>
</dbReference>
<dbReference type="HOGENOM" id="CLU_093757_0_0_4"/>
<dbReference type="Proteomes" id="UP000002287">
    <property type="component" value="Chromosome 1"/>
</dbReference>
<dbReference type="GO" id="GO:0005737">
    <property type="term" value="C:cytoplasm"/>
    <property type="evidence" value="ECO:0007669"/>
    <property type="project" value="UniProtKB-SubCell"/>
</dbReference>
<dbReference type="GO" id="GO:0016151">
    <property type="term" value="F:nickel cation binding"/>
    <property type="evidence" value="ECO:0007669"/>
    <property type="project" value="UniProtKB-UniRule"/>
</dbReference>
<dbReference type="GO" id="GO:0051082">
    <property type="term" value="F:unfolded protein binding"/>
    <property type="evidence" value="ECO:0007669"/>
    <property type="project" value="UniProtKB-UniRule"/>
</dbReference>
<dbReference type="GO" id="GO:0006457">
    <property type="term" value="P:protein folding"/>
    <property type="evidence" value="ECO:0007669"/>
    <property type="project" value="InterPro"/>
</dbReference>
<dbReference type="GO" id="GO:0065003">
    <property type="term" value="P:protein-containing complex assembly"/>
    <property type="evidence" value="ECO:0007669"/>
    <property type="project" value="InterPro"/>
</dbReference>
<dbReference type="GO" id="GO:0019627">
    <property type="term" value="P:urea metabolic process"/>
    <property type="evidence" value="ECO:0007669"/>
    <property type="project" value="InterPro"/>
</dbReference>
<dbReference type="CDD" id="cd00571">
    <property type="entry name" value="UreE"/>
    <property type="match status" value="1"/>
</dbReference>
<dbReference type="Gene3D" id="2.60.260.20">
    <property type="entry name" value="Urease metallochaperone UreE, N-terminal domain"/>
    <property type="match status" value="1"/>
</dbReference>
<dbReference type="Gene3D" id="3.30.70.790">
    <property type="entry name" value="UreE, C-terminal domain"/>
    <property type="match status" value="1"/>
</dbReference>
<dbReference type="HAMAP" id="MF_00822">
    <property type="entry name" value="UreE"/>
    <property type="match status" value="1"/>
</dbReference>
<dbReference type="InterPro" id="IPR012406">
    <property type="entry name" value="UreE"/>
</dbReference>
<dbReference type="InterPro" id="IPR007864">
    <property type="entry name" value="UreE_C_dom"/>
</dbReference>
<dbReference type="InterPro" id="IPR004029">
    <property type="entry name" value="UreE_N"/>
</dbReference>
<dbReference type="InterPro" id="IPR036118">
    <property type="entry name" value="UreE_N_sf"/>
</dbReference>
<dbReference type="NCBIfam" id="NF009751">
    <property type="entry name" value="PRK13261.1-1"/>
    <property type="match status" value="1"/>
</dbReference>
<dbReference type="NCBIfam" id="NF009762">
    <property type="entry name" value="PRK13263.1"/>
    <property type="match status" value="1"/>
</dbReference>
<dbReference type="Pfam" id="PF05194">
    <property type="entry name" value="UreE_C"/>
    <property type="match status" value="1"/>
</dbReference>
<dbReference type="Pfam" id="PF02814">
    <property type="entry name" value="UreE_N"/>
    <property type="match status" value="1"/>
</dbReference>
<dbReference type="SMART" id="SM00988">
    <property type="entry name" value="UreE_N"/>
    <property type="match status" value="1"/>
</dbReference>
<dbReference type="SUPFAM" id="SSF69737">
    <property type="entry name" value="Urease metallochaperone UreE, C-terminal domain"/>
    <property type="match status" value="1"/>
</dbReference>
<dbReference type="SUPFAM" id="SSF69287">
    <property type="entry name" value="Urease metallochaperone UreE, N-terminal domain"/>
    <property type="match status" value="1"/>
</dbReference>
<feature type="chain" id="PRO_1000083885" description="Urease accessory protein UreE">
    <location>
        <begin position="1"/>
        <end position="200"/>
    </location>
</feature>
<feature type="region of interest" description="Disordered" evidence="2">
    <location>
        <begin position="171"/>
        <end position="200"/>
    </location>
</feature>